<keyword id="KW-0961">Cell wall biogenesis/degradation</keyword>
<keyword id="KW-0325">Glycoprotein</keyword>
<keyword id="KW-0328">Glycosyltransferase</keyword>
<keyword id="KW-0333">Golgi apparatus</keyword>
<keyword id="KW-0472">Membrane</keyword>
<keyword id="KW-1185">Reference proteome</keyword>
<keyword id="KW-0735">Signal-anchor</keyword>
<keyword id="KW-0808">Transferase</keyword>
<keyword id="KW-0812">Transmembrane</keyword>
<keyword id="KW-1133">Transmembrane helix</keyword>
<sequence>MRRRGGDSFRRAGRRKISNVVWWVLSGIALLLFFLILSKAGHIEPRPSIPKRRYRNDKFVEGMNMTEEMLSPTSVARQVNDQIALAKAFVVIAKESKNLQFAWDLSAQIRNSQLLLSSAATRRSPLTVLESESTIRDMAVLLYQAQQLHYDSATMIMRLKASIQALEEQMSSVSEKSSKYGQIAAEEVPKSLYCLGVRLTTEWFQNLDLQRTLKERSRVDSKLTDNSLYHFCVFSDNIIATSVVVNSTALNSKAPEKVVFHLVTNEINYAAMKAWFAINMDNLRGVTVEVQKFEDFSWLNASYVPVLKQLQDSDTQSYYFSGHNDDGRTPIKFRNPKYLSMLNHLRFYIPEVFPALKKVVFLDDDVVVQKDLSSLFSIDLNKNVNGAVETCMETFHRYHKYLNYSHPLIRSHFDPDACGWAFGMNVFDLVEWRKRNVTGIYHYWQEKNVDRTLWKLGTLPPGLLTFYGLTEALEASWHILGLGYTNVDARVIEKGAVLHFNGNLKPWLKIGIEKYKPLWERYVDYTSPFMQQCNFH</sequence>
<evidence type="ECO:0000250" key="1"/>
<evidence type="ECO:0000255" key="2"/>
<evidence type="ECO:0000269" key="3">
    <source>
    </source>
</evidence>
<evidence type="ECO:0000305" key="4"/>
<proteinExistence type="evidence at transcript level"/>
<dbReference type="EC" id="2.4.1.-"/>
<dbReference type="EMBL" id="AC006234">
    <property type="protein sequence ID" value="AAD20914.2"/>
    <property type="molecule type" value="Genomic_DNA"/>
</dbReference>
<dbReference type="EMBL" id="CP002685">
    <property type="protein sequence ID" value="AEC07076.1"/>
    <property type="molecule type" value="Genomic_DNA"/>
</dbReference>
<dbReference type="EMBL" id="AY035019">
    <property type="protein sequence ID" value="AAK59524.1"/>
    <property type="molecule type" value="mRNA"/>
</dbReference>
<dbReference type="EMBL" id="AY059085">
    <property type="protein sequence ID" value="AAL15191.1"/>
    <property type="molecule type" value="mRNA"/>
</dbReference>
<dbReference type="EMBL" id="AK176863">
    <property type="protein sequence ID" value="BAD44626.1"/>
    <property type="molecule type" value="mRNA"/>
</dbReference>
<dbReference type="PIR" id="F84593">
    <property type="entry name" value="F84593"/>
</dbReference>
<dbReference type="RefSeq" id="NP_565485.1">
    <property type="nucleotide sequence ID" value="NM_127647.2"/>
</dbReference>
<dbReference type="SMR" id="Q9SKT6"/>
<dbReference type="FunCoup" id="Q9SKT6">
    <property type="interactions" value="885"/>
</dbReference>
<dbReference type="STRING" id="3702.Q9SKT6"/>
<dbReference type="CAZy" id="GT8">
    <property type="family name" value="Glycosyltransferase Family 8"/>
</dbReference>
<dbReference type="GlyCosmos" id="Q9SKT6">
    <property type="glycosylation" value="5 sites, No reported glycans"/>
</dbReference>
<dbReference type="GlyGen" id="Q9SKT6">
    <property type="glycosylation" value="5 sites"/>
</dbReference>
<dbReference type="iPTMnet" id="Q9SKT6"/>
<dbReference type="PaxDb" id="3702-AT2G20810.1"/>
<dbReference type="ProteomicsDB" id="221906"/>
<dbReference type="EnsemblPlants" id="AT2G20810.1">
    <property type="protein sequence ID" value="AT2G20810.1"/>
    <property type="gene ID" value="AT2G20810"/>
</dbReference>
<dbReference type="GeneID" id="816611"/>
<dbReference type="Gramene" id="AT2G20810.1">
    <property type="protein sequence ID" value="AT2G20810.1"/>
    <property type="gene ID" value="AT2G20810"/>
</dbReference>
<dbReference type="KEGG" id="ath:AT2G20810"/>
<dbReference type="Araport" id="AT2G20810"/>
<dbReference type="TAIR" id="AT2G20810">
    <property type="gene designation" value="GAUT10"/>
</dbReference>
<dbReference type="eggNOG" id="ENOG502QRMA">
    <property type="taxonomic scope" value="Eukaryota"/>
</dbReference>
<dbReference type="HOGENOM" id="CLU_010770_5_0_1"/>
<dbReference type="InParanoid" id="Q9SKT6"/>
<dbReference type="OMA" id="FFQAQQF"/>
<dbReference type="OrthoDB" id="411524at2759"/>
<dbReference type="PhylomeDB" id="Q9SKT6"/>
<dbReference type="UniPathway" id="UPA00845"/>
<dbReference type="PRO" id="PR:Q9SKT6"/>
<dbReference type="Proteomes" id="UP000006548">
    <property type="component" value="Chromosome 2"/>
</dbReference>
<dbReference type="ExpressionAtlas" id="Q9SKT6">
    <property type="expression patterns" value="baseline and differential"/>
</dbReference>
<dbReference type="GO" id="GO:0005768">
    <property type="term" value="C:endosome"/>
    <property type="evidence" value="ECO:0007005"/>
    <property type="project" value="TAIR"/>
</dbReference>
<dbReference type="GO" id="GO:0005794">
    <property type="term" value="C:Golgi apparatus"/>
    <property type="evidence" value="ECO:0000314"/>
    <property type="project" value="TAIR"/>
</dbReference>
<dbReference type="GO" id="GO:0000137">
    <property type="term" value="C:Golgi cis cisterna"/>
    <property type="evidence" value="ECO:0000314"/>
    <property type="project" value="TAIR"/>
</dbReference>
<dbReference type="GO" id="GO:0000139">
    <property type="term" value="C:Golgi membrane"/>
    <property type="evidence" value="ECO:0007669"/>
    <property type="project" value="UniProtKB-SubCell"/>
</dbReference>
<dbReference type="GO" id="GO:0005802">
    <property type="term" value="C:trans-Golgi network"/>
    <property type="evidence" value="ECO:0007005"/>
    <property type="project" value="TAIR"/>
</dbReference>
<dbReference type="GO" id="GO:0047262">
    <property type="term" value="F:polygalacturonate 4-alpha-galacturonosyltransferase activity"/>
    <property type="evidence" value="ECO:0000250"/>
    <property type="project" value="TAIR"/>
</dbReference>
<dbReference type="GO" id="GO:0052546">
    <property type="term" value="P:cell wall pectin metabolic process"/>
    <property type="evidence" value="ECO:0000316"/>
    <property type="project" value="TAIR"/>
</dbReference>
<dbReference type="GO" id="GO:0010442">
    <property type="term" value="P:guard cell morphogenesis"/>
    <property type="evidence" value="ECO:0000316"/>
    <property type="project" value="TAIR"/>
</dbReference>
<dbReference type="GO" id="GO:0048358">
    <property type="term" value="P:mucilage pectin biosynthetic process"/>
    <property type="evidence" value="ECO:0000315"/>
    <property type="project" value="TAIR"/>
</dbReference>
<dbReference type="CDD" id="cd06429">
    <property type="entry name" value="GT8_like_1"/>
    <property type="match status" value="1"/>
</dbReference>
<dbReference type="Gene3D" id="3.90.550.10">
    <property type="entry name" value="Spore Coat Polysaccharide Biosynthesis Protein SpsA, Chain A"/>
    <property type="match status" value="1"/>
</dbReference>
<dbReference type="InterPro" id="IPR029993">
    <property type="entry name" value="GAUT"/>
</dbReference>
<dbReference type="InterPro" id="IPR002495">
    <property type="entry name" value="Glyco_trans_8"/>
</dbReference>
<dbReference type="InterPro" id="IPR029044">
    <property type="entry name" value="Nucleotide-diphossugar_trans"/>
</dbReference>
<dbReference type="PANTHER" id="PTHR32116:SF74">
    <property type="entry name" value="GALACTURONOSYLTRANSFERASE 10-RELATED"/>
    <property type="match status" value="1"/>
</dbReference>
<dbReference type="PANTHER" id="PTHR32116">
    <property type="entry name" value="GALACTURONOSYLTRANSFERASE 4-RELATED"/>
    <property type="match status" value="1"/>
</dbReference>
<dbReference type="Pfam" id="PF01501">
    <property type="entry name" value="Glyco_transf_8"/>
    <property type="match status" value="1"/>
</dbReference>
<dbReference type="SUPFAM" id="SSF53448">
    <property type="entry name" value="Nucleotide-diphospho-sugar transferases"/>
    <property type="match status" value="1"/>
</dbReference>
<gene>
    <name type="primary">GAUT10</name>
    <name type="synonym">LGT4</name>
    <name type="ordered locus">At2g20810</name>
    <name type="ORF">F5H14.44</name>
</gene>
<protein>
    <recommendedName>
        <fullName>Probable galacturonosyltransferase 10</fullName>
        <ecNumber>2.4.1.-</ecNumber>
    </recommendedName>
    <alternativeName>
        <fullName>Like glycosyl transferase 4</fullName>
    </alternativeName>
</protein>
<comment type="function">
    <text evidence="1">May be involved in pectin and/or xylans biosynthesis in cell walls.</text>
</comment>
<comment type="pathway">
    <text>Glycan metabolism; pectin biosynthesis.</text>
</comment>
<comment type="subcellular location">
    <subcellularLocation>
        <location evidence="1">Golgi apparatus membrane</location>
        <topology evidence="1">Single-pass type II membrane protein</topology>
    </subcellularLocation>
</comment>
<comment type="tissue specificity">
    <text evidence="3">Expressed in roots, inflorescences, siliques, leaves and stems.</text>
</comment>
<comment type="disruption phenotype">
    <text evidence="3">No obvious phenotype. Reduced galacturonic acid content in cell wall.</text>
</comment>
<comment type="similarity">
    <text evidence="4">Belongs to the glycosyltransferase 8 family.</text>
</comment>
<name>GAUTA_ARATH</name>
<organism>
    <name type="scientific">Arabidopsis thaliana</name>
    <name type="common">Mouse-ear cress</name>
    <dbReference type="NCBI Taxonomy" id="3702"/>
    <lineage>
        <taxon>Eukaryota</taxon>
        <taxon>Viridiplantae</taxon>
        <taxon>Streptophyta</taxon>
        <taxon>Embryophyta</taxon>
        <taxon>Tracheophyta</taxon>
        <taxon>Spermatophyta</taxon>
        <taxon>Magnoliopsida</taxon>
        <taxon>eudicotyledons</taxon>
        <taxon>Gunneridae</taxon>
        <taxon>Pentapetalae</taxon>
        <taxon>rosids</taxon>
        <taxon>malvids</taxon>
        <taxon>Brassicales</taxon>
        <taxon>Brassicaceae</taxon>
        <taxon>Camelineae</taxon>
        <taxon>Arabidopsis</taxon>
    </lineage>
</organism>
<accession>Q9SKT6</accession>
<accession>Q67XF6</accession>
<accession>Q93VL7</accession>
<reference key="1">
    <citation type="journal article" date="1999" name="Nature">
        <title>Sequence and analysis of chromosome 2 of the plant Arabidopsis thaliana.</title>
        <authorList>
            <person name="Lin X."/>
            <person name="Kaul S."/>
            <person name="Rounsley S.D."/>
            <person name="Shea T.P."/>
            <person name="Benito M.-I."/>
            <person name="Town C.D."/>
            <person name="Fujii C.Y."/>
            <person name="Mason T.M."/>
            <person name="Bowman C.L."/>
            <person name="Barnstead M.E."/>
            <person name="Feldblyum T.V."/>
            <person name="Buell C.R."/>
            <person name="Ketchum K.A."/>
            <person name="Lee J.J."/>
            <person name="Ronning C.M."/>
            <person name="Koo H.L."/>
            <person name="Moffat K.S."/>
            <person name="Cronin L.A."/>
            <person name="Shen M."/>
            <person name="Pai G."/>
            <person name="Van Aken S."/>
            <person name="Umayam L."/>
            <person name="Tallon L.J."/>
            <person name="Gill J.E."/>
            <person name="Adams M.D."/>
            <person name="Carrera A.J."/>
            <person name="Creasy T.H."/>
            <person name="Goodman H.M."/>
            <person name="Somerville C.R."/>
            <person name="Copenhaver G.P."/>
            <person name="Preuss D."/>
            <person name="Nierman W.C."/>
            <person name="White O."/>
            <person name="Eisen J.A."/>
            <person name="Salzberg S.L."/>
            <person name="Fraser C.M."/>
            <person name="Venter J.C."/>
        </authorList>
    </citation>
    <scope>NUCLEOTIDE SEQUENCE [LARGE SCALE GENOMIC DNA]</scope>
    <source>
        <strain>cv. Columbia</strain>
    </source>
</reference>
<reference key="2">
    <citation type="journal article" date="2017" name="Plant J.">
        <title>Araport11: a complete reannotation of the Arabidopsis thaliana reference genome.</title>
        <authorList>
            <person name="Cheng C.Y."/>
            <person name="Krishnakumar V."/>
            <person name="Chan A.P."/>
            <person name="Thibaud-Nissen F."/>
            <person name="Schobel S."/>
            <person name="Town C.D."/>
        </authorList>
    </citation>
    <scope>GENOME REANNOTATION</scope>
    <source>
        <strain>cv. Columbia</strain>
    </source>
</reference>
<reference key="3">
    <citation type="journal article" date="2003" name="Science">
        <title>Empirical analysis of transcriptional activity in the Arabidopsis genome.</title>
        <authorList>
            <person name="Yamada K."/>
            <person name="Lim J."/>
            <person name="Dale J.M."/>
            <person name="Chen H."/>
            <person name="Shinn P."/>
            <person name="Palm C.J."/>
            <person name="Southwick A.M."/>
            <person name="Wu H.C."/>
            <person name="Kim C.J."/>
            <person name="Nguyen M."/>
            <person name="Pham P.K."/>
            <person name="Cheuk R.F."/>
            <person name="Karlin-Newmann G."/>
            <person name="Liu S.X."/>
            <person name="Lam B."/>
            <person name="Sakano H."/>
            <person name="Wu T."/>
            <person name="Yu G."/>
            <person name="Miranda M."/>
            <person name="Quach H.L."/>
            <person name="Tripp M."/>
            <person name="Chang C.H."/>
            <person name="Lee J.M."/>
            <person name="Toriumi M.J."/>
            <person name="Chan M.M."/>
            <person name="Tang C.C."/>
            <person name="Onodera C.S."/>
            <person name="Deng J.M."/>
            <person name="Akiyama K."/>
            <person name="Ansari Y."/>
            <person name="Arakawa T."/>
            <person name="Banh J."/>
            <person name="Banno F."/>
            <person name="Bowser L."/>
            <person name="Brooks S.Y."/>
            <person name="Carninci P."/>
            <person name="Chao Q."/>
            <person name="Choy N."/>
            <person name="Enju A."/>
            <person name="Goldsmith A.D."/>
            <person name="Gurjal M."/>
            <person name="Hansen N.F."/>
            <person name="Hayashizaki Y."/>
            <person name="Johnson-Hopson C."/>
            <person name="Hsuan V.W."/>
            <person name="Iida K."/>
            <person name="Karnes M."/>
            <person name="Khan S."/>
            <person name="Koesema E."/>
            <person name="Ishida J."/>
            <person name="Jiang P.X."/>
            <person name="Jones T."/>
            <person name="Kawai J."/>
            <person name="Kamiya A."/>
            <person name="Meyers C."/>
            <person name="Nakajima M."/>
            <person name="Narusaka M."/>
            <person name="Seki M."/>
            <person name="Sakurai T."/>
            <person name="Satou M."/>
            <person name="Tamse R."/>
            <person name="Vaysberg M."/>
            <person name="Wallender E.K."/>
            <person name="Wong C."/>
            <person name="Yamamura Y."/>
            <person name="Yuan S."/>
            <person name="Shinozaki K."/>
            <person name="Davis R.W."/>
            <person name="Theologis A."/>
            <person name="Ecker J.R."/>
        </authorList>
    </citation>
    <scope>NUCLEOTIDE SEQUENCE [LARGE SCALE MRNA]</scope>
    <source>
        <strain>cv. Columbia</strain>
    </source>
</reference>
<reference key="4">
    <citation type="submission" date="2004-09" db="EMBL/GenBank/DDBJ databases">
        <title>Large-scale analysis of RIKEN Arabidopsis full-length (RAFL) cDNAs.</title>
        <authorList>
            <person name="Totoki Y."/>
            <person name="Seki M."/>
            <person name="Ishida J."/>
            <person name="Nakajima M."/>
            <person name="Enju A."/>
            <person name="Kamiya A."/>
            <person name="Narusaka M."/>
            <person name="Shin-i T."/>
            <person name="Nakagawa M."/>
            <person name="Sakamoto N."/>
            <person name="Oishi K."/>
            <person name="Kohara Y."/>
            <person name="Kobayashi M."/>
            <person name="Toyoda A."/>
            <person name="Sakaki Y."/>
            <person name="Sakurai T."/>
            <person name="Iida K."/>
            <person name="Akiyama K."/>
            <person name="Satou M."/>
            <person name="Toyoda T."/>
            <person name="Konagaya A."/>
            <person name="Carninci P."/>
            <person name="Kawai J."/>
            <person name="Hayashizaki Y."/>
            <person name="Shinozaki K."/>
        </authorList>
    </citation>
    <scope>NUCLEOTIDE SEQUENCE [LARGE SCALE MRNA]</scope>
    <source>
        <strain>cv. Columbia</strain>
    </source>
</reference>
<reference key="5">
    <citation type="journal article" date="2000" name="Plant Mol. Biol.">
        <title>Organization and structural evolution of four multigene families in Arabidopsis thaliana: AtLCAD, AtLGT, AtMYST and AtHD-GL2.</title>
        <authorList>
            <person name="Tavares R."/>
            <person name="Aubourg S."/>
            <person name="Lecharny A."/>
            <person name="Kreis M."/>
        </authorList>
    </citation>
    <scope>GENE FAMILY</scope>
    <scope>NOMENCLATURE</scope>
</reference>
<reference key="6">
    <citation type="journal article" date="2006" name="Proc. Natl. Acad. Sci. U.S.A.">
        <title>Functional identification of an Arabidopsis pectin biosynthetic homogalacturonan galacturonosyltransferase.</title>
        <authorList>
            <person name="Sterling J.D."/>
            <person name="Atmodjo M.A."/>
            <person name="Inwood S.E."/>
            <person name="Kumar Kolli V.S."/>
            <person name="Quigley H.F."/>
            <person name="Hahn M.G."/>
            <person name="Mohnen D."/>
        </authorList>
    </citation>
    <scope>GENE FAMILY</scope>
    <scope>NOMENCLATURE</scope>
</reference>
<reference key="7">
    <citation type="journal article" date="2009" name="Mol. Plant">
        <title>Arabidopsis thaliana T-DNA mutants implicate GAUT genes in the biosynthesis of pectin and xylan in cell walls and seed testa.</title>
        <authorList>
            <person name="Caffall K.H."/>
            <person name="Pattathil S."/>
            <person name="Phillips S.E."/>
            <person name="Hahn M.G."/>
            <person name="Mohnen D."/>
        </authorList>
    </citation>
    <scope>TISSUE SPECIFICITY</scope>
    <scope>DISRUPTION PHENOTYPE</scope>
</reference>
<feature type="chain" id="PRO_0000392560" description="Probable galacturonosyltransferase 10">
    <location>
        <begin position="1"/>
        <end position="536"/>
    </location>
</feature>
<feature type="topological domain" description="Cytoplasmic" evidence="2">
    <location>
        <begin position="1"/>
        <end position="16"/>
    </location>
</feature>
<feature type="transmembrane region" description="Helical; Signal-anchor for type II membrane protein" evidence="2">
    <location>
        <begin position="17"/>
        <end position="37"/>
    </location>
</feature>
<feature type="topological domain" description="Lumenal" evidence="2">
    <location>
        <begin position="38"/>
        <end position="536"/>
    </location>
</feature>
<feature type="glycosylation site" description="N-linked (GlcNAc...) asparagine" evidence="2">
    <location>
        <position position="64"/>
    </location>
</feature>
<feature type="glycosylation site" description="N-linked (GlcNAc...) asparagine" evidence="2">
    <location>
        <position position="246"/>
    </location>
</feature>
<feature type="glycosylation site" description="N-linked (GlcNAc...) asparagine" evidence="2">
    <location>
        <position position="300"/>
    </location>
</feature>
<feature type="glycosylation site" description="N-linked (GlcNAc...) asparagine" evidence="2">
    <location>
        <position position="403"/>
    </location>
</feature>
<feature type="glycosylation site" description="N-linked (GlcNAc...) asparagine" evidence="2">
    <location>
        <position position="436"/>
    </location>
</feature>
<feature type="sequence conflict" description="In Ref. 4; BAD44626." evidence="4" ref="4">
    <original>G</original>
    <variation>R</variation>
    <location>
        <position position="327"/>
    </location>
</feature>